<keyword id="KW-0028">Amino-acid biosynthesis</keyword>
<keyword id="KW-0055">Arginine biosynthesis</keyword>
<keyword id="KW-0067">ATP-binding</keyword>
<keyword id="KW-0963">Cytoplasm</keyword>
<keyword id="KW-0418">Kinase</keyword>
<keyword id="KW-0547">Nucleotide-binding</keyword>
<keyword id="KW-1185">Reference proteome</keyword>
<keyword id="KW-0808">Transferase</keyword>
<dbReference type="EC" id="2.7.2.8" evidence="1"/>
<dbReference type="EMBL" id="CP000360">
    <property type="protein sequence ID" value="ABF43160.1"/>
    <property type="molecule type" value="Genomic_DNA"/>
</dbReference>
<dbReference type="RefSeq" id="WP_011524959.1">
    <property type="nucleotide sequence ID" value="NC_008009.1"/>
</dbReference>
<dbReference type="SMR" id="Q1IIZ0"/>
<dbReference type="STRING" id="204669.Acid345_4160"/>
<dbReference type="EnsemblBacteria" id="ABF43160">
    <property type="protein sequence ID" value="ABF43160"/>
    <property type="gene ID" value="Acid345_4160"/>
</dbReference>
<dbReference type="KEGG" id="aba:Acid345_4160"/>
<dbReference type="eggNOG" id="COG0548">
    <property type="taxonomic scope" value="Bacteria"/>
</dbReference>
<dbReference type="HOGENOM" id="CLU_053680_1_0_0"/>
<dbReference type="OrthoDB" id="9803155at2"/>
<dbReference type="UniPathway" id="UPA00068">
    <property type="reaction ID" value="UER00107"/>
</dbReference>
<dbReference type="Proteomes" id="UP000002432">
    <property type="component" value="Chromosome"/>
</dbReference>
<dbReference type="GO" id="GO:0005737">
    <property type="term" value="C:cytoplasm"/>
    <property type="evidence" value="ECO:0007669"/>
    <property type="project" value="UniProtKB-SubCell"/>
</dbReference>
<dbReference type="GO" id="GO:0003991">
    <property type="term" value="F:acetylglutamate kinase activity"/>
    <property type="evidence" value="ECO:0007669"/>
    <property type="project" value="UniProtKB-UniRule"/>
</dbReference>
<dbReference type="GO" id="GO:0005524">
    <property type="term" value="F:ATP binding"/>
    <property type="evidence" value="ECO:0007669"/>
    <property type="project" value="UniProtKB-UniRule"/>
</dbReference>
<dbReference type="GO" id="GO:0042450">
    <property type="term" value="P:arginine biosynthetic process via ornithine"/>
    <property type="evidence" value="ECO:0007669"/>
    <property type="project" value="UniProtKB-UniRule"/>
</dbReference>
<dbReference type="GO" id="GO:0006526">
    <property type="term" value="P:L-arginine biosynthetic process"/>
    <property type="evidence" value="ECO:0007669"/>
    <property type="project" value="UniProtKB-UniPathway"/>
</dbReference>
<dbReference type="CDD" id="cd04238">
    <property type="entry name" value="AAK_NAGK-like"/>
    <property type="match status" value="1"/>
</dbReference>
<dbReference type="FunFam" id="3.40.1160.10:FF:000004">
    <property type="entry name" value="Acetylglutamate kinase"/>
    <property type="match status" value="1"/>
</dbReference>
<dbReference type="Gene3D" id="3.40.1160.10">
    <property type="entry name" value="Acetylglutamate kinase-like"/>
    <property type="match status" value="1"/>
</dbReference>
<dbReference type="HAMAP" id="MF_00082">
    <property type="entry name" value="ArgB"/>
    <property type="match status" value="1"/>
</dbReference>
<dbReference type="InterPro" id="IPR036393">
    <property type="entry name" value="AceGlu_kinase-like_sf"/>
</dbReference>
<dbReference type="InterPro" id="IPR004662">
    <property type="entry name" value="AcgluKinase_fam"/>
</dbReference>
<dbReference type="InterPro" id="IPR037528">
    <property type="entry name" value="ArgB"/>
</dbReference>
<dbReference type="InterPro" id="IPR001048">
    <property type="entry name" value="Asp/Glu/Uridylate_kinase"/>
</dbReference>
<dbReference type="InterPro" id="IPR001057">
    <property type="entry name" value="Glu/AcGlu_kinase"/>
</dbReference>
<dbReference type="NCBIfam" id="TIGR00761">
    <property type="entry name" value="argB"/>
    <property type="match status" value="1"/>
</dbReference>
<dbReference type="PANTHER" id="PTHR23342">
    <property type="entry name" value="N-ACETYLGLUTAMATE SYNTHASE"/>
    <property type="match status" value="1"/>
</dbReference>
<dbReference type="PANTHER" id="PTHR23342:SF0">
    <property type="entry name" value="N-ACETYLGLUTAMATE SYNTHASE, MITOCHONDRIAL"/>
    <property type="match status" value="1"/>
</dbReference>
<dbReference type="Pfam" id="PF00696">
    <property type="entry name" value="AA_kinase"/>
    <property type="match status" value="1"/>
</dbReference>
<dbReference type="PIRSF" id="PIRSF000728">
    <property type="entry name" value="NAGK"/>
    <property type="match status" value="1"/>
</dbReference>
<dbReference type="PRINTS" id="PR00474">
    <property type="entry name" value="GLU5KINASE"/>
</dbReference>
<dbReference type="SUPFAM" id="SSF53633">
    <property type="entry name" value="Carbamate kinase-like"/>
    <property type="match status" value="1"/>
</dbReference>
<reference key="1">
    <citation type="journal article" date="2009" name="Appl. Environ. Microbiol.">
        <title>Three genomes from the phylum Acidobacteria provide insight into the lifestyles of these microorganisms in soils.</title>
        <authorList>
            <person name="Ward N.L."/>
            <person name="Challacombe J.F."/>
            <person name="Janssen P.H."/>
            <person name="Henrissat B."/>
            <person name="Coutinho P.M."/>
            <person name="Wu M."/>
            <person name="Xie G."/>
            <person name="Haft D.H."/>
            <person name="Sait M."/>
            <person name="Badger J."/>
            <person name="Barabote R.D."/>
            <person name="Bradley B."/>
            <person name="Brettin T.S."/>
            <person name="Brinkac L.M."/>
            <person name="Bruce D."/>
            <person name="Creasy T."/>
            <person name="Daugherty S.C."/>
            <person name="Davidsen T.M."/>
            <person name="DeBoy R.T."/>
            <person name="Detter J.C."/>
            <person name="Dodson R.J."/>
            <person name="Durkin A.S."/>
            <person name="Ganapathy A."/>
            <person name="Gwinn-Giglio M."/>
            <person name="Han C.S."/>
            <person name="Khouri H."/>
            <person name="Kiss H."/>
            <person name="Kothari S.P."/>
            <person name="Madupu R."/>
            <person name="Nelson K.E."/>
            <person name="Nelson W.C."/>
            <person name="Paulsen I."/>
            <person name="Penn K."/>
            <person name="Ren Q."/>
            <person name="Rosovitz M.J."/>
            <person name="Selengut J.D."/>
            <person name="Shrivastava S."/>
            <person name="Sullivan S.A."/>
            <person name="Tapia R."/>
            <person name="Thompson L.S."/>
            <person name="Watkins K.L."/>
            <person name="Yang Q."/>
            <person name="Yu C."/>
            <person name="Zafar N."/>
            <person name="Zhou L."/>
            <person name="Kuske C.R."/>
        </authorList>
    </citation>
    <scope>NUCLEOTIDE SEQUENCE [LARGE SCALE GENOMIC DNA]</scope>
    <source>
        <strain>Ellin345</strain>
    </source>
</reference>
<organism>
    <name type="scientific">Koribacter versatilis (strain Ellin345)</name>
    <dbReference type="NCBI Taxonomy" id="204669"/>
    <lineage>
        <taxon>Bacteria</taxon>
        <taxon>Pseudomonadati</taxon>
        <taxon>Acidobacteriota</taxon>
        <taxon>Terriglobia</taxon>
        <taxon>Terriglobales</taxon>
        <taxon>Candidatus Korobacteraceae</taxon>
        <taxon>Candidatus Korobacter</taxon>
    </lineage>
</organism>
<protein>
    <recommendedName>
        <fullName evidence="1">Acetylglutamate kinase</fullName>
        <ecNumber evidence="1">2.7.2.8</ecNumber>
    </recommendedName>
    <alternativeName>
        <fullName evidence="1">N-acetyl-L-glutamate 5-phosphotransferase</fullName>
    </alternativeName>
    <alternativeName>
        <fullName evidence="1">NAG kinase</fullName>
        <shortName evidence="1">NAGK</shortName>
    </alternativeName>
</protein>
<proteinExistence type="inferred from homology"/>
<comment type="function">
    <text evidence="1">Catalyzes the ATP-dependent phosphorylation of N-acetyl-L-glutamate.</text>
</comment>
<comment type="catalytic activity">
    <reaction evidence="1">
        <text>N-acetyl-L-glutamate + ATP = N-acetyl-L-glutamyl 5-phosphate + ADP</text>
        <dbReference type="Rhea" id="RHEA:14629"/>
        <dbReference type="ChEBI" id="CHEBI:30616"/>
        <dbReference type="ChEBI" id="CHEBI:44337"/>
        <dbReference type="ChEBI" id="CHEBI:57936"/>
        <dbReference type="ChEBI" id="CHEBI:456216"/>
        <dbReference type="EC" id="2.7.2.8"/>
    </reaction>
</comment>
<comment type="pathway">
    <text evidence="1">Amino-acid biosynthesis; L-arginine biosynthesis; N(2)-acetyl-L-ornithine from L-glutamate: step 2/4.</text>
</comment>
<comment type="subcellular location">
    <subcellularLocation>
        <location evidence="1">Cytoplasm</location>
    </subcellularLocation>
</comment>
<comment type="similarity">
    <text evidence="1">Belongs to the acetylglutamate kinase family. ArgB subfamily.</text>
</comment>
<sequence length="261" mass="26829">MKIVLKIGGAALENKDLVGQFCTTVASLAKDGHHVLVVHGGGAALSRTLKELGIEPKFLNGLRVTDARTRDVALMVLGGLLNKQLAAAIGAVGQPAIGLCGSDLHLCVARKKPLAEDLGFVGEIASVNEEAIAHLWANNAVPVVASLAQGADGEFYNINADEMASALAAACIADTLIFLTDVPGVKDANGDVLNRLGLDRIESLIANGIVSGGMLPKLEACKRALQAGVGSVRILPATKAEALPSLFESPIAFGTELVATV</sequence>
<gene>
    <name evidence="1" type="primary">argB</name>
    <name type="ordered locus">Acid345_4160</name>
</gene>
<name>ARGB_KORVE</name>
<accession>Q1IIZ0</accession>
<feature type="chain" id="PRO_0000264677" description="Acetylglutamate kinase">
    <location>
        <begin position="1"/>
        <end position="261"/>
    </location>
</feature>
<feature type="binding site" evidence="1">
    <location>
        <begin position="41"/>
        <end position="42"/>
    </location>
    <ligand>
        <name>substrate</name>
    </ligand>
</feature>
<feature type="binding site" evidence="1">
    <location>
        <position position="63"/>
    </location>
    <ligand>
        <name>substrate</name>
    </ligand>
</feature>
<feature type="binding site" evidence="1">
    <location>
        <position position="157"/>
    </location>
    <ligand>
        <name>substrate</name>
    </ligand>
</feature>
<feature type="site" description="Transition state stabilizer" evidence="1">
    <location>
        <position position="6"/>
    </location>
</feature>
<feature type="site" description="Transition state stabilizer" evidence="1">
    <location>
        <position position="217"/>
    </location>
</feature>
<evidence type="ECO:0000255" key="1">
    <source>
        <dbReference type="HAMAP-Rule" id="MF_00082"/>
    </source>
</evidence>